<evidence type="ECO:0000255" key="1">
    <source>
        <dbReference type="HAMAP-Rule" id="MF_00036"/>
    </source>
</evidence>
<feature type="chain" id="PRO_0000347532" description="Alanine--tRNA ligase">
    <location>
        <begin position="1"/>
        <end position="874"/>
    </location>
</feature>
<feature type="binding site" evidence="1">
    <location>
        <position position="564"/>
    </location>
    <ligand>
        <name>Zn(2+)</name>
        <dbReference type="ChEBI" id="CHEBI:29105"/>
    </ligand>
</feature>
<feature type="binding site" evidence="1">
    <location>
        <position position="568"/>
    </location>
    <ligand>
        <name>Zn(2+)</name>
        <dbReference type="ChEBI" id="CHEBI:29105"/>
    </ligand>
</feature>
<feature type="binding site" evidence="1">
    <location>
        <position position="665"/>
    </location>
    <ligand>
        <name>Zn(2+)</name>
        <dbReference type="ChEBI" id="CHEBI:29105"/>
    </ligand>
</feature>
<feature type="binding site" evidence="1">
    <location>
        <position position="669"/>
    </location>
    <ligand>
        <name>Zn(2+)</name>
        <dbReference type="ChEBI" id="CHEBI:29105"/>
    </ligand>
</feature>
<organism>
    <name type="scientific">Burkholderia pseudomallei (strain 668)</name>
    <dbReference type="NCBI Taxonomy" id="320373"/>
    <lineage>
        <taxon>Bacteria</taxon>
        <taxon>Pseudomonadati</taxon>
        <taxon>Pseudomonadota</taxon>
        <taxon>Betaproteobacteria</taxon>
        <taxon>Burkholderiales</taxon>
        <taxon>Burkholderiaceae</taxon>
        <taxon>Burkholderia</taxon>
        <taxon>pseudomallei group</taxon>
    </lineage>
</organism>
<keyword id="KW-0030">Aminoacyl-tRNA synthetase</keyword>
<keyword id="KW-0067">ATP-binding</keyword>
<keyword id="KW-0963">Cytoplasm</keyword>
<keyword id="KW-0436">Ligase</keyword>
<keyword id="KW-0479">Metal-binding</keyword>
<keyword id="KW-0547">Nucleotide-binding</keyword>
<keyword id="KW-0648">Protein biosynthesis</keyword>
<keyword id="KW-0694">RNA-binding</keyword>
<keyword id="KW-0820">tRNA-binding</keyword>
<keyword id="KW-0862">Zinc</keyword>
<reference key="1">
    <citation type="journal article" date="2010" name="Genome Biol. Evol.">
        <title>Continuing evolution of Burkholderia mallei through genome reduction and large-scale rearrangements.</title>
        <authorList>
            <person name="Losada L."/>
            <person name="Ronning C.M."/>
            <person name="DeShazer D."/>
            <person name="Woods D."/>
            <person name="Fedorova N."/>
            <person name="Kim H.S."/>
            <person name="Shabalina S.A."/>
            <person name="Pearson T.R."/>
            <person name="Brinkac L."/>
            <person name="Tan P."/>
            <person name="Nandi T."/>
            <person name="Crabtree J."/>
            <person name="Badger J."/>
            <person name="Beckstrom-Sternberg S."/>
            <person name="Saqib M."/>
            <person name="Schutzer S.E."/>
            <person name="Keim P."/>
            <person name="Nierman W.C."/>
        </authorList>
    </citation>
    <scope>NUCLEOTIDE SEQUENCE [LARGE SCALE GENOMIC DNA]</scope>
    <source>
        <strain>668</strain>
    </source>
</reference>
<sequence>MKAAEIREKFLKFFESKGHTIVRSSSLVPGNDPTLLFTNSGMVQFKDVFLGAETRPYSRATTAQRSVRAGGKHNDLENVGYTARHHTFFEMLGNFSFGDYFKRDAIHYAWELLTSVYKLPADKLWVTVYHDDDEAYDIWAKEVGVPAERIIRIGDNKGARYASDNFWQMGDTGPCGPCSEIFYDHGPDVWGGPPGSPEEDGDRYIEIWNLVFMQFNRDAQGNMTRLPKPCVDTGMGLERIAAVLQHVHSNYEIDLFQQLIKASARETGVADLANNSLKVIADHIRACSFLIVDGVIPGNEGRGYVLRRIVRRAIRHGYKLGRKAPFFHKLVADLVAEMGAAYPELKEAEPRVTDVLRQEEERFFETIEHGMSILEAALAELDAAGGKTLDGELAFKLHDTYGFPLDLTADVCRERGVTVDEPAFDDAMARQREQARAAGKFKATQGLEYTGAKTTFHGYEEIAFDDAKVVALYVEGASVGEVKAGESAVVVLDHTPFYAESGGQVGDQGVLANAATRFAVGDTLKVQADVIGHHGELEQGTLKVGDVVRAEIDAARRARTARNHSATHLMHKALRDVLGSHVQQKGSLVDADKTRFDFAHNAPLTDDEIRRVEAIVNEQVLANAPGIVRVMPYDDAVKGGAMALFGEKYGDEVRVLDLGFSRELCGGTHVHRTGDIGLFKIVAEGGVAAGIRRVEAITGDNAVRYVQALDARVNAAAAALKAQPSELLQRIGQVQDQVKSLEKELGALKSRLASSQGDELAQQAVEVGGVHVLAATLDGADAKTLRETVDKLKDKLKSAAIVLAAVDGGKVSLIAGVTADASKKVKAGELVNFVAQQVGGKGGGRPDMAQAGGTEPAKLPAALAGVKGWVEARL</sequence>
<dbReference type="EC" id="6.1.1.7" evidence="1"/>
<dbReference type="EMBL" id="CP000570">
    <property type="protein sequence ID" value="ABN84821.1"/>
    <property type="molecule type" value="Genomic_DNA"/>
</dbReference>
<dbReference type="RefSeq" id="WP_011851494.1">
    <property type="nucleotide sequence ID" value="NC_009074.1"/>
</dbReference>
<dbReference type="SMR" id="A3N8K7"/>
<dbReference type="KEGG" id="bpd:BURPS668_1637"/>
<dbReference type="HOGENOM" id="CLU_004485_1_1_4"/>
<dbReference type="GO" id="GO:0005829">
    <property type="term" value="C:cytosol"/>
    <property type="evidence" value="ECO:0007669"/>
    <property type="project" value="TreeGrafter"/>
</dbReference>
<dbReference type="GO" id="GO:0004813">
    <property type="term" value="F:alanine-tRNA ligase activity"/>
    <property type="evidence" value="ECO:0007669"/>
    <property type="project" value="UniProtKB-UniRule"/>
</dbReference>
<dbReference type="GO" id="GO:0002161">
    <property type="term" value="F:aminoacyl-tRNA deacylase activity"/>
    <property type="evidence" value="ECO:0007669"/>
    <property type="project" value="TreeGrafter"/>
</dbReference>
<dbReference type="GO" id="GO:0005524">
    <property type="term" value="F:ATP binding"/>
    <property type="evidence" value="ECO:0007669"/>
    <property type="project" value="UniProtKB-UniRule"/>
</dbReference>
<dbReference type="GO" id="GO:0000049">
    <property type="term" value="F:tRNA binding"/>
    <property type="evidence" value="ECO:0007669"/>
    <property type="project" value="UniProtKB-KW"/>
</dbReference>
<dbReference type="GO" id="GO:0008270">
    <property type="term" value="F:zinc ion binding"/>
    <property type="evidence" value="ECO:0007669"/>
    <property type="project" value="UniProtKB-UniRule"/>
</dbReference>
<dbReference type="GO" id="GO:0006419">
    <property type="term" value="P:alanyl-tRNA aminoacylation"/>
    <property type="evidence" value="ECO:0007669"/>
    <property type="project" value="UniProtKB-UniRule"/>
</dbReference>
<dbReference type="GO" id="GO:0045892">
    <property type="term" value="P:negative regulation of DNA-templated transcription"/>
    <property type="evidence" value="ECO:0007669"/>
    <property type="project" value="TreeGrafter"/>
</dbReference>
<dbReference type="CDD" id="cd00673">
    <property type="entry name" value="AlaRS_core"/>
    <property type="match status" value="1"/>
</dbReference>
<dbReference type="FunFam" id="2.40.30.130:FF:000001">
    <property type="entry name" value="Alanine--tRNA ligase"/>
    <property type="match status" value="1"/>
</dbReference>
<dbReference type="FunFam" id="3.10.310.40:FF:000001">
    <property type="entry name" value="Alanine--tRNA ligase"/>
    <property type="match status" value="1"/>
</dbReference>
<dbReference type="FunFam" id="3.30.54.20:FF:000001">
    <property type="entry name" value="Alanine--tRNA ligase"/>
    <property type="match status" value="1"/>
</dbReference>
<dbReference type="FunFam" id="3.30.930.10:FF:000004">
    <property type="entry name" value="Alanine--tRNA ligase"/>
    <property type="match status" value="1"/>
</dbReference>
<dbReference type="FunFam" id="3.30.980.10:FF:000004">
    <property type="entry name" value="Alanine--tRNA ligase, cytoplasmic"/>
    <property type="match status" value="1"/>
</dbReference>
<dbReference type="Gene3D" id="2.40.30.130">
    <property type="match status" value="1"/>
</dbReference>
<dbReference type="Gene3D" id="3.10.310.40">
    <property type="match status" value="1"/>
</dbReference>
<dbReference type="Gene3D" id="3.30.54.20">
    <property type="match status" value="1"/>
</dbReference>
<dbReference type="Gene3D" id="6.10.250.550">
    <property type="match status" value="1"/>
</dbReference>
<dbReference type="Gene3D" id="3.30.930.10">
    <property type="entry name" value="Bira Bifunctional Protein, Domain 2"/>
    <property type="match status" value="1"/>
</dbReference>
<dbReference type="Gene3D" id="3.30.980.10">
    <property type="entry name" value="Threonyl-trna Synthetase, Chain A, domain 2"/>
    <property type="match status" value="1"/>
</dbReference>
<dbReference type="HAMAP" id="MF_00036_B">
    <property type="entry name" value="Ala_tRNA_synth_B"/>
    <property type="match status" value="1"/>
</dbReference>
<dbReference type="InterPro" id="IPR045864">
    <property type="entry name" value="aa-tRNA-synth_II/BPL/LPL"/>
</dbReference>
<dbReference type="InterPro" id="IPR002318">
    <property type="entry name" value="Ala-tRNA-lgiase_IIc"/>
</dbReference>
<dbReference type="InterPro" id="IPR018162">
    <property type="entry name" value="Ala-tRNA-ligase_IIc_anticod-bd"/>
</dbReference>
<dbReference type="InterPro" id="IPR018165">
    <property type="entry name" value="Ala-tRNA-synth_IIc_core"/>
</dbReference>
<dbReference type="InterPro" id="IPR018164">
    <property type="entry name" value="Ala-tRNA-synth_IIc_N"/>
</dbReference>
<dbReference type="InterPro" id="IPR050058">
    <property type="entry name" value="Ala-tRNA_ligase"/>
</dbReference>
<dbReference type="InterPro" id="IPR023033">
    <property type="entry name" value="Ala_tRNA_ligase_euk/bac"/>
</dbReference>
<dbReference type="InterPro" id="IPR003156">
    <property type="entry name" value="DHHA1_dom"/>
</dbReference>
<dbReference type="InterPro" id="IPR018163">
    <property type="entry name" value="Thr/Ala-tRNA-synth_IIc_edit"/>
</dbReference>
<dbReference type="InterPro" id="IPR009000">
    <property type="entry name" value="Transl_B-barrel_sf"/>
</dbReference>
<dbReference type="InterPro" id="IPR012947">
    <property type="entry name" value="tRNA_SAD"/>
</dbReference>
<dbReference type="NCBIfam" id="TIGR00344">
    <property type="entry name" value="alaS"/>
    <property type="match status" value="1"/>
</dbReference>
<dbReference type="PANTHER" id="PTHR11777:SF9">
    <property type="entry name" value="ALANINE--TRNA LIGASE, CYTOPLASMIC"/>
    <property type="match status" value="1"/>
</dbReference>
<dbReference type="PANTHER" id="PTHR11777">
    <property type="entry name" value="ALANYL-TRNA SYNTHETASE"/>
    <property type="match status" value="1"/>
</dbReference>
<dbReference type="Pfam" id="PF02272">
    <property type="entry name" value="DHHA1"/>
    <property type="match status" value="1"/>
</dbReference>
<dbReference type="Pfam" id="PF01411">
    <property type="entry name" value="tRNA-synt_2c"/>
    <property type="match status" value="1"/>
</dbReference>
<dbReference type="Pfam" id="PF07973">
    <property type="entry name" value="tRNA_SAD"/>
    <property type="match status" value="1"/>
</dbReference>
<dbReference type="PRINTS" id="PR00980">
    <property type="entry name" value="TRNASYNTHALA"/>
</dbReference>
<dbReference type="SMART" id="SM00863">
    <property type="entry name" value="tRNA_SAD"/>
    <property type="match status" value="1"/>
</dbReference>
<dbReference type="SUPFAM" id="SSF55681">
    <property type="entry name" value="Class II aaRS and biotin synthetases"/>
    <property type="match status" value="1"/>
</dbReference>
<dbReference type="SUPFAM" id="SSF101353">
    <property type="entry name" value="Putative anticodon-binding domain of alanyl-tRNA synthetase (AlaRS)"/>
    <property type="match status" value="1"/>
</dbReference>
<dbReference type="SUPFAM" id="SSF55186">
    <property type="entry name" value="ThrRS/AlaRS common domain"/>
    <property type="match status" value="1"/>
</dbReference>
<dbReference type="SUPFAM" id="SSF50447">
    <property type="entry name" value="Translation proteins"/>
    <property type="match status" value="1"/>
</dbReference>
<dbReference type="PROSITE" id="PS50860">
    <property type="entry name" value="AA_TRNA_LIGASE_II_ALA"/>
    <property type="match status" value="1"/>
</dbReference>
<comment type="function">
    <text evidence="1">Catalyzes the attachment of alanine to tRNA(Ala) in a two-step reaction: alanine is first activated by ATP to form Ala-AMP and then transferred to the acceptor end of tRNA(Ala). Also edits incorrectly charged Ser-tRNA(Ala) and Gly-tRNA(Ala) via its editing domain.</text>
</comment>
<comment type="catalytic activity">
    <reaction evidence="1">
        <text>tRNA(Ala) + L-alanine + ATP = L-alanyl-tRNA(Ala) + AMP + diphosphate</text>
        <dbReference type="Rhea" id="RHEA:12540"/>
        <dbReference type="Rhea" id="RHEA-COMP:9657"/>
        <dbReference type="Rhea" id="RHEA-COMP:9923"/>
        <dbReference type="ChEBI" id="CHEBI:30616"/>
        <dbReference type="ChEBI" id="CHEBI:33019"/>
        <dbReference type="ChEBI" id="CHEBI:57972"/>
        <dbReference type="ChEBI" id="CHEBI:78442"/>
        <dbReference type="ChEBI" id="CHEBI:78497"/>
        <dbReference type="ChEBI" id="CHEBI:456215"/>
        <dbReference type="EC" id="6.1.1.7"/>
    </reaction>
</comment>
<comment type="cofactor">
    <cofactor evidence="1">
        <name>Zn(2+)</name>
        <dbReference type="ChEBI" id="CHEBI:29105"/>
    </cofactor>
    <text evidence="1">Binds 1 zinc ion per subunit.</text>
</comment>
<comment type="subcellular location">
    <subcellularLocation>
        <location evidence="1">Cytoplasm</location>
    </subcellularLocation>
</comment>
<comment type="domain">
    <text evidence="1">Consists of three domains; the N-terminal catalytic domain, the editing domain and the C-terminal C-Ala domain. The editing domain removes incorrectly charged amino acids, while the C-Ala domain, along with tRNA(Ala), serves as a bridge to cooperatively bring together the editing and aminoacylation centers thus stimulating deacylation of misacylated tRNAs.</text>
</comment>
<comment type="similarity">
    <text evidence="1">Belongs to the class-II aminoacyl-tRNA synthetase family.</text>
</comment>
<protein>
    <recommendedName>
        <fullName evidence="1">Alanine--tRNA ligase</fullName>
        <ecNumber evidence="1">6.1.1.7</ecNumber>
    </recommendedName>
    <alternativeName>
        <fullName evidence="1">Alanyl-tRNA synthetase</fullName>
        <shortName evidence="1">AlaRS</shortName>
    </alternativeName>
</protein>
<gene>
    <name evidence="1" type="primary">alaS</name>
    <name type="ordered locus">BURPS668_1637</name>
</gene>
<name>SYA_BURP6</name>
<accession>A3N8K7</accession>
<proteinExistence type="inferred from homology"/>